<reference key="1">
    <citation type="journal article" date="1989" name="Biochem. J.">
        <title>Two distinct azurins function in the electron-transport chain of the obligate methylotroph Methylomonas J.</title>
        <authorList>
            <person name="Ambler R.P."/>
            <person name="Tobari J."/>
        </authorList>
    </citation>
    <scope>PROTEIN SEQUENCE</scope>
</reference>
<reference key="2">
    <citation type="journal article" date="1999" name="J. Biol. Inorg. Chem.">
        <title>Spectroscopic and electrochemical properties of two azurins (Az-iso1 and Az-iso2) from the obligate methylotroph Methylomonas sp. strain J and the structure of novel Az-iso2.</title>
        <authorList>
            <person name="Suzuki S."/>
            <person name="Nakamura N."/>
            <person name="Yamaguchi K."/>
            <person name="Kataoka K."/>
            <person name="Inoue T."/>
            <person name="Nishio N."/>
            <person name="Kai Y."/>
            <person name="Tobari J."/>
        </authorList>
    </citation>
    <scope>X-RAY CRYSTALLOGRAPHY (1.6 ANGSTROMS)</scope>
</reference>
<evidence type="ECO:0000250" key="1"/>
<evidence type="ECO:0007829" key="2">
    <source>
        <dbReference type="PDB" id="1CUO"/>
    </source>
</evidence>
<organism>
    <name type="scientific">Methylomonas sp. (strain J)</name>
    <dbReference type="NCBI Taxonomy" id="32038"/>
    <lineage>
        <taxon>Bacteria</taxon>
        <taxon>Pseudomonadati</taxon>
        <taxon>Pseudomonadota</taxon>
        <taxon>Gammaproteobacteria</taxon>
        <taxon>Methylococcales</taxon>
        <taxon>Methylococcaceae</taxon>
        <taxon>Methylomonas</taxon>
    </lineage>
</organism>
<proteinExistence type="evidence at protein level"/>
<sequence length="129" mass="13805">ASCETTVTSGDTMTYSTRSISVPASCAEFTVNFEHKGHMPKTGMGHNWVLAKSADVGDVAKEGAHAGADNNFVTPGDKRVIAFTPIIGGGEKTSVKFKVSALSKDEAYTYFCSYPGHFSMMRGTLKLEE</sequence>
<accession>P12335</accession>
<protein>
    <recommendedName>
        <fullName>Azurin iso-2</fullName>
    </recommendedName>
</protein>
<comment type="function">
    <text>This methylothroph organism uses azurin in the oxidation of methylamine. Iso-2 is probably the acceptor of electrons from methylamine dehydrogenase.</text>
</comment>
<comment type="subcellular location">
    <subcellularLocation>
        <location>Periplasm</location>
    </subcellularLocation>
</comment>
<comment type="induction">
    <text>Produced during growth on methylamine.</text>
</comment>
<feature type="chain" id="PRO_0000085541" description="Azurin iso-2">
    <location>
        <begin position="1"/>
        <end position="129"/>
    </location>
</feature>
<feature type="domain" description="Plastocyanin-like">
    <location>
        <begin position="1"/>
        <end position="129"/>
    </location>
</feature>
<feature type="binding site">
    <location>
        <position position="46"/>
    </location>
    <ligand>
        <name>Cu cation</name>
        <dbReference type="ChEBI" id="CHEBI:23378"/>
    </ligand>
</feature>
<feature type="binding site">
    <location>
        <position position="112"/>
    </location>
    <ligand>
        <name>Cu cation</name>
        <dbReference type="ChEBI" id="CHEBI:23378"/>
    </ligand>
</feature>
<feature type="binding site">
    <location>
        <position position="117"/>
    </location>
    <ligand>
        <name>Cu cation</name>
        <dbReference type="ChEBI" id="CHEBI:23378"/>
    </ligand>
</feature>
<feature type="binding site">
    <location>
        <position position="121"/>
    </location>
    <ligand>
        <name>Cu cation</name>
        <dbReference type="ChEBI" id="CHEBI:23378"/>
    </ligand>
</feature>
<feature type="disulfide bond" evidence="1">
    <location>
        <begin position="3"/>
        <end position="26"/>
    </location>
</feature>
<feature type="strand" evidence="2">
    <location>
        <begin position="4"/>
        <end position="9"/>
    </location>
</feature>
<feature type="strand" evidence="2">
    <location>
        <begin position="11"/>
        <end position="13"/>
    </location>
</feature>
<feature type="strand" evidence="2">
    <location>
        <begin position="18"/>
        <end position="23"/>
    </location>
</feature>
<feature type="strand" evidence="2">
    <location>
        <begin position="27"/>
        <end position="35"/>
    </location>
</feature>
<feature type="strand" evidence="2">
    <location>
        <begin position="37"/>
        <end position="39"/>
    </location>
</feature>
<feature type="helix" evidence="2">
    <location>
        <begin position="41"/>
        <end position="44"/>
    </location>
</feature>
<feature type="strand" evidence="2">
    <location>
        <begin position="49"/>
        <end position="52"/>
    </location>
</feature>
<feature type="helix" evidence="2">
    <location>
        <begin position="53"/>
        <end position="55"/>
    </location>
</feature>
<feature type="helix" evidence="2">
    <location>
        <begin position="56"/>
        <end position="64"/>
    </location>
</feature>
<feature type="helix" evidence="2">
    <location>
        <begin position="68"/>
        <end position="70"/>
    </location>
</feature>
<feature type="strand" evidence="2">
    <location>
        <begin position="81"/>
        <end position="83"/>
    </location>
</feature>
<feature type="strand" evidence="2">
    <location>
        <begin position="92"/>
        <end position="98"/>
    </location>
</feature>
<feature type="helix" evidence="2">
    <location>
        <begin position="99"/>
        <end position="101"/>
    </location>
</feature>
<feature type="strand" evidence="2">
    <location>
        <begin position="108"/>
        <end position="111"/>
    </location>
</feature>
<feature type="turn" evidence="2">
    <location>
        <begin position="118"/>
        <end position="120"/>
    </location>
</feature>
<feature type="strand" evidence="2">
    <location>
        <begin position="121"/>
        <end position="128"/>
    </location>
</feature>
<name>AZUR2_METJ</name>
<dbReference type="PIR" id="S05247">
    <property type="entry name" value="S05247"/>
</dbReference>
<dbReference type="PDB" id="1CUO">
    <property type="method" value="X-ray"/>
    <property type="resolution" value="1.60 A"/>
    <property type="chains" value="A=1-129"/>
</dbReference>
<dbReference type="PDB" id="1UAT">
    <property type="method" value="X-ray"/>
    <property type="resolution" value="1.90 A"/>
    <property type="chains" value="A=1-129"/>
</dbReference>
<dbReference type="PDBsum" id="1CUO"/>
<dbReference type="PDBsum" id="1UAT"/>
<dbReference type="SMR" id="P12335"/>
<dbReference type="EvolutionaryTrace" id="P12335"/>
<dbReference type="GO" id="GO:0042597">
    <property type="term" value="C:periplasmic space"/>
    <property type="evidence" value="ECO:0007669"/>
    <property type="project" value="UniProtKB-SubCell"/>
</dbReference>
<dbReference type="GO" id="GO:0005507">
    <property type="term" value="F:copper ion binding"/>
    <property type="evidence" value="ECO:0007669"/>
    <property type="project" value="InterPro"/>
</dbReference>
<dbReference type="GO" id="GO:0009055">
    <property type="term" value="F:electron transfer activity"/>
    <property type="evidence" value="ECO:0007669"/>
    <property type="project" value="InterPro"/>
</dbReference>
<dbReference type="CDD" id="cd13843">
    <property type="entry name" value="Azurin_like"/>
    <property type="match status" value="1"/>
</dbReference>
<dbReference type="Gene3D" id="2.60.40.420">
    <property type="entry name" value="Cupredoxins - blue copper proteins"/>
    <property type="match status" value="1"/>
</dbReference>
<dbReference type="InterPro" id="IPR014068">
    <property type="entry name" value="Azurin"/>
</dbReference>
<dbReference type="InterPro" id="IPR000923">
    <property type="entry name" value="BlueCu_1"/>
</dbReference>
<dbReference type="InterPro" id="IPR028871">
    <property type="entry name" value="BlueCu_1_BS"/>
</dbReference>
<dbReference type="InterPro" id="IPR050845">
    <property type="entry name" value="Cu-binding_ET"/>
</dbReference>
<dbReference type="InterPro" id="IPR008972">
    <property type="entry name" value="Cupredoxin"/>
</dbReference>
<dbReference type="NCBIfam" id="TIGR02695">
    <property type="entry name" value="azurin"/>
    <property type="match status" value="1"/>
</dbReference>
<dbReference type="PANTHER" id="PTHR38439">
    <property type="entry name" value="AURACYANIN-B"/>
    <property type="match status" value="1"/>
</dbReference>
<dbReference type="PANTHER" id="PTHR38439:SF2">
    <property type="entry name" value="OUTER MEMBRANE PROTEIN H.8"/>
    <property type="match status" value="1"/>
</dbReference>
<dbReference type="Pfam" id="PF00127">
    <property type="entry name" value="Copper-bind"/>
    <property type="match status" value="1"/>
</dbReference>
<dbReference type="SUPFAM" id="SSF49503">
    <property type="entry name" value="Cupredoxins"/>
    <property type="match status" value="1"/>
</dbReference>
<dbReference type="PROSITE" id="PS00196">
    <property type="entry name" value="COPPER_BLUE"/>
    <property type="match status" value="1"/>
</dbReference>
<keyword id="KW-0002">3D-structure</keyword>
<keyword id="KW-0186">Copper</keyword>
<keyword id="KW-0903">Direct protein sequencing</keyword>
<keyword id="KW-1015">Disulfide bond</keyword>
<keyword id="KW-0249">Electron transport</keyword>
<keyword id="KW-0479">Metal-binding</keyword>
<keyword id="KW-0574">Periplasm</keyword>
<keyword id="KW-0813">Transport</keyword>